<keyword id="KW-1003">Cell membrane</keyword>
<keyword id="KW-0175">Coiled coil</keyword>
<keyword id="KW-0472">Membrane</keyword>
<keyword id="KW-1185">Reference proteome</keyword>
<keyword id="KW-0732">Signal</keyword>
<keyword id="KW-0812">Transmembrane</keyword>
<keyword id="KW-1133">Transmembrane helix</keyword>
<protein>
    <recommendedName>
        <fullName>Protein GAMETE EXPRESSED 1</fullName>
    </recommendedName>
</protein>
<gene>
    <name type="primary">GEX1</name>
    <name type="ordered locus">At5g55490</name>
    <name type="ORF">MTE17.20</name>
</gene>
<feature type="signal peptide" evidence="1">
    <location>
        <begin position="1"/>
        <end position="24"/>
    </location>
</feature>
<feature type="chain" id="PRO_0000416784" description="Protein GAMETE EXPRESSED 1">
    <location>
        <begin position="25"/>
        <end position="593"/>
    </location>
</feature>
<feature type="topological domain" description="Extracellular" evidence="1">
    <location>
        <begin position="25"/>
        <end position="427"/>
    </location>
</feature>
<feature type="transmembrane region" description="Helical" evidence="1">
    <location>
        <begin position="428"/>
        <end position="448"/>
    </location>
</feature>
<feature type="topological domain" description="Cytoplasmic" evidence="1">
    <location>
        <begin position="449"/>
        <end position="457"/>
    </location>
</feature>
<feature type="transmembrane region" description="Helical" evidence="1">
    <location>
        <begin position="458"/>
        <end position="476"/>
    </location>
</feature>
<feature type="topological domain" description="Extracellular" evidence="1">
    <location>
        <begin position="477"/>
        <end position="485"/>
    </location>
</feature>
<feature type="transmembrane region" description="Helical" evidence="1">
    <location>
        <begin position="486"/>
        <end position="506"/>
    </location>
</feature>
<feature type="topological domain" description="Cytoplasmic" evidence="1">
    <location>
        <begin position="507"/>
        <end position="593"/>
    </location>
</feature>
<feature type="coiled-coil region" evidence="1">
    <location>
        <begin position="156"/>
        <end position="194"/>
    </location>
</feature>
<feature type="coiled-coil region" evidence="1">
    <location>
        <begin position="350"/>
        <end position="387"/>
    </location>
</feature>
<feature type="sequence conflict" description="In Ref. 4; AAW70162." evidence="4" ref="4">
    <original>Q</original>
    <variation>P</variation>
    <location>
        <position position="360"/>
    </location>
</feature>
<sequence length="593" mass="67963">MDRFSRKCLLFLLLIILLDSPLTCHSWGWFSSSSSSAEDPYSSSFSRSRKSNPDFSMEVFSDQKAVQVLENKLVGLTSCWQNAYSYLLAGCKETIATEEKRKRFAWYLSDCFIKDSGRPAFPTCKDESVMMSCLKKLDDHEHKIYLDFLLETNTICQQLQSNAFKNEIERLVNELKNTAQYTEDKLDILESKSDALIQTSSMIHDSLGSLDVRVQNVASVTNTLETSVSGLSQQTVEISQEQKNIAESQLALRDGQVKMKETLKDGMDMFLDAYTNIQEGVDKLKSDTEQIEVEISVLGNNLSTKMIDLQSTTDDIGTKTRSSLDKQQKLLDGQTVALDGIQFLTRFQSEALQESRNTLQRLKEFSQEQQEDLAKRQEKLQEVHDHLFENSKSMLEAQVAFEAKQANMFVALDKLFALHNAMLLESRVIKAFVIYFLSIFVIYMFTSTKQTYIIRPRLYIGLCVTLALEVASLRYVNDTERQAWMINLIRSLFALLASAQLLHAALSYRDYEVLNHQILLRLVDKVNDMQSKKELSYDEDTESEVDWTSWVDTDLTDDDDNLADPDYKIPLLIKDNPVTTSSLTRRLYNFRPR</sequence>
<comment type="function">
    <text evidence="3">Has a dual function during gametophyte development and early embryogenesis. Required for correct pollen maturation.</text>
</comment>
<comment type="subunit">
    <text evidence="3">Homodimer.</text>
</comment>
<comment type="subcellular location">
    <subcellularLocation>
        <location evidence="2">Cell membrane</location>
        <topology evidence="2">Multi-pass membrane protein</topology>
    </subcellularLocation>
</comment>
<comment type="tissue specificity">
    <text evidence="2 3">In tricellular pollen, expressed in mature sperm cells. Not expressed in bicellular or unicellular pollen. Detected in ovules, roots and guard cells. Expressed in the embryo sac before cellularization, in the egg cell after cellularization, in the zygote/embryo immediately after fertilization and in the pollen vegetative cell.</text>
</comment>
<comment type="domain">
    <text evidence="3">The extracellular domain (25-427) is sufficient for male and female gametophyte development before double fertilization, but not for early embryogenesis. The cytoplasmic domain (507-593) is necessary for correct early embryogenesis and mediates homodimer formation at the plasma membrane.</text>
</comment>
<comment type="disruption phenotype">
    <text evidence="3">Embryo lethal when homozygote.</text>
</comment>
<comment type="sequence caution" evidence="4">
    <conflict type="erroneous gene model prediction">
        <sequence resource="EMBL-CDS" id="BAB08566"/>
    </conflict>
</comment>
<proteinExistence type="evidence at protein level"/>
<reference key="1">
    <citation type="journal article" date="1998" name="DNA Res.">
        <title>Structural analysis of Arabidopsis thaliana chromosome 5. VII. Sequence features of the regions of 1,013,767 bp covered by sixteen physically assigned P1 and TAC clones.</title>
        <authorList>
            <person name="Nakamura Y."/>
            <person name="Sato S."/>
            <person name="Asamizu E."/>
            <person name="Kaneko T."/>
            <person name="Kotani H."/>
            <person name="Miyajima N."/>
            <person name="Tabata S."/>
        </authorList>
    </citation>
    <scope>NUCLEOTIDE SEQUENCE [LARGE SCALE GENOMIC DNA]</scope>
    <source>
        <strain>cv. Columbia</strain>
    </source>
</reference>
<reference key="2">
    <citation type="journal article" date="2017" name="Plant J.">
        <title>Araport11: a complete reannotation of the Arabidopsis thaliana reference genome.</title>
        <authorList>
            <person name="Cheng C.Y."/>
            <person name="Krishnakumar V."/>
            <person name="Chan A.P."/>
            <person name="Thibaud-Nissen F."/>
            <person name="Schobel S."/>
            <person name="Town C.D."/>
        </authorList>
    </citation>
    <scope>GENOME REANNOTATION</scope>
    <source>
        <strain>cv. Columbia</strain>
    </source>
</reference>
<reference key="3">
    <citation type="submission" date="2004-09" db="EMBL/GenBank/DDBJ databases">
        <title>Large-scale analysis of RIKEN Arabidopsis full-length (RAFL) cDNAs.</title>
        <authorList>
            <person name="Totoki Y."/>
            <person name="Seki M."/>
            <person name="Ishida J."/>
            <person name="Nakajima M."/>
            <person name="Enju A."/>
            <person name="Kamiya A."/>
            <person name="Narusaka M."/>
            <person name="Shin-i T."/>
            <person name="Nakagawa M."/>
            <person name="Sakamoto N."/>
            <person name="Oishi K."/>
            <person name="Kohara Y."/>
            <person name="Kobayashi M."/>
            <person name="Toyoda A."/>
            <person name="Sakaki Y."/>
            <person name="Sakurai T."/>
            <person name="Iida K."/>
            <person name="Akiyama K."/>
            <person name="Satou M."/>
            <person name="Toyoda T."/>
            <person name="Konagaya A."/>
            <person name="Carninci P."/>
            <person name="Kawai J."/>
            <person name="Hayashizaki Y."/>
            <person name="Shinozaki K."/>
        </authorList>
    </citation>
    <scope>NUCLEOTIDE SEQUENCE [LARGE SCALE MRNA]</scope>
    <source>
        <strain>cv. Columbia</strain>
    </source>
</reference>
<reference key="4">
    <citation type="journal article" date="2005" name="Plant Physiol.">
        <title>Green sperm. Identification of male gamete promoters in Arabidopsis.</title>
        <authorList>
            <person name="Engel M.L."/>
            <person name="Holmes-Davis R."/>
            <person name="McCormick S."/>
        </authorList>
    </citation>
    <scope>NUCLEOTIDE SEQUENCE [MRNA] OF 1-586</scope>
    <scope>TISSUE SPECIFICITY</scope>
    <scope>SUBCELLULAR LOCATION</scope>
    <source>
        <tissue>Pollen</tissue>
    </source>
</reference>
<reference key="5">
    <citation type="submission" date="2004-03" db="EMBL/GenBank/DDBJ databases">
        <title>Arabidopsis ORF clones.</title>
        <authorList>
            <person name="Cheuk R."/>
            <person name="Chen H."/>
            <person name="Kim C.J."/>
            <person name="Shinn P."/>
            <person name="Carninci P."/>
            <person name="Hayashizaki Y."/>
            <person name="Ishida J."/>
            <person name="Kamiya A."/>
            <person name="Kawai J."/>
            <person name="Narusaka M."/>
            <person name="Sakurai T."/>
            <person name="Satou M."/>
            <person name="Seki M."/>
            <person name="Shinozaki K."/>
            <person name="Ecker J.R."/>
        </authorList>
    </citation>
    <scope>NUCLEOTIDE SEQUENCE [LARGE SCALE MRNA] OF 57-593</scope>
</reference>
<reference key="6">
    <citation type="journal article" date="2011" name="Plant J.">
        <title>Arabidopsis thaliana GEX1 has dual functions in gametophyte development and early embryogenesis.</title>
        <authorList>
            <person name="Alandete-Saez M."/>
            <person name="Ron M."/>
            <person name="Leiboff S."/>
            <person name="McCormick S."/>
        </authorList>
    </citation>
    <scope>FUNCTION</scope>
    <scope>TISSUE SPECIFICITY</scope>
    <scope>SUBUNIT</scope>
    <scope>DOMAIN</scope>
    <scope>DISRUPTION PHENOTYPE</scope>
</reference>
<dbReference type="EMBL" id="AB015479">
    <property type="protein sequence ID" value="BAB08566.1"/>
    <property type="status" value="ALT_SEQ"/>
    <property type="molecule type" value="Genomic_DNA"/>
</dbReference>
<dbReference type="EMBL" id="CP002688">
    <property type="protein sequence ID" value="AED96634.1"/>
    <property type="molecule type" value="Genomic_DNA"/>
</dbReference>
<dbReference type="EMBL" id="CP002688">
    <property type="protein sequence ID" value="ANM68230.1"/>
    <property type="molecule type" value="Genomic_DNA"/>
</dbReference>
<dbReference type="EMBL" id="AK175610">
    <property type="protein sequence ID" value="BAD43373.1"/>
    <property type="molecule type" value="mRNA"/>
</dbReference>
<dbReference type="EMBL" id="AY746360">
    <property type="protein sequence ID" value="AAW70162.1"/>
    <property type="molecule type" value="mRNA"/>
</dbReference>
<dbReference type="EMBL" id="BT012292">
    <property type="protein sequence ID" value="AAS76779.1"/>
    <property type="molecule type" value="mRNA"/>
</dbReference>
<dbReference type="RefSeq" id="NP_001318802.1">
    <property type="nucleotide sequence ID" value="NM_001345127.1"/>
</dbReference>
<dbReference type="RefSeq" id="NP_200360.2">
    <property type="nucleotide sequence ID" value="NM_124931.2"/>
</dbReference>
<dbReference type="SMR" id="Q681K7"/>
<dbReference type="FunCoup" id="Q681K7">
    <property type="interactions" value="2"/>
</dbReference>
<dbReference type="STRING" id="3702.Q681K7"/>
<dbReference type="iPTMnet" id="Q681K7"/>
<dbReference type="PaxDb" id="3702-AT5G55490.1"/>
<dbReference type="ProteomicsDB" id="247131"/>
<dbReference type="EnsemblPlants" id="AT5G55490.1">
    <property type="protein sequence ID" value="AT5G55490.1"/>
    <property type="gene ID" value="AT5G55490"/>
</dbReference>
<dbReference type="EnsemblPlants" id="AT5G55490.9">
    <property type="protein sequence ID" value="AT5G55490.9"/>
    <property type="gene ID" value="AT5G55490"/>
</dbReference>
<dbReference type="GeneID" id="835642"/>
<dbReference type="Gramene" id="AT5G55490.1">
    <property type="protein sequence ID" value="AT5G55490.1"/>
    <property type="gene ID" value="AT5G55490"/>
</dbReference>
<dbReference type="Gramene" id="AT5G55490.9">
    <property type="protein sequence ID" value="AT5G55490.9"/>
    <property type="gene ID" value="AT5G55490"/>
</dbReference>
<dbReference type="KEGG" id="ath:AT5G55490"/>
<dbReference type="Araport" id="AT5G55490"/>
<dbReference type="TAIR" id="AT5G55490">
    <property type="gene designation" value="GEX1"/>
</dbReference>
<dbReference type="eggNOG" id="ENOG502QR0N">
    <property type="taxonomic scope" value="Eukaryota"/>
</dbReference>
<dbReference type="HOGENOM" id="CLU_032432_0_0_1"/>
<dbReference type="InParanoid" id="Q681K7"/>
<dbReference type="PhylomeDB" id="Q681K7"/>
<dbReference type="PRO" id="PR:Q681K7"/>
<dbReference type="Proteomes" id="UP000006548">
    <property type="component" value="Chromosome 5"/>
</dbReference>
<dbReference type="ExpressionAtlas" id="Q681K7">
    <property type="expression patterns" value="baseline and differential"/>
</dbReference>
<dbReference type="GO" id="GO:0005886">
    <property type="term" value="C:plasma membrane"/>
    <property type="evidence" value="ECO:0000314"/>
    <property type="project" value="UniProtKB"/>
</dbReference>
<dbReference type="GO" id="GO:0042802">
    <property type="term" value="F:identical protein binding"/>
    <property type="evidence" value="ECO:0000314"/>
    <property type="project" value="UniProtKB"/>
</dbReference>
<dbReference type="GO" id="GO:0009793">
    <property type="term" value="P:embryo development ending in seed dormancy"/>
    <property type="evidence" value="ECO:0000315"/>
    <property type="project" value="UniProtKB"/>
</dbReference>
<dbReference type="GO" id="GO:0009553">
    <property type="term" value="P:embryo sac development"/>
    <property type="evidence" value="ECO:0000315"/>
    <property type="project" value="UniProtKB"/>
</dbReference>
<dbReference type="GO" id="GO:0009555">
    <property type="term" value="P:pollen development"/>
    <property type="evidence" value="ECO:0000315"/>
    <property type="project" value="UniProtKB"/>
</dbReference>
<dbReference type="InterPro" id="IPR040346">
    <property type="entry name" value="GEX1/Brambleberry"/>
</dbReference>
<dbReference type="PANTHER" id="PTHR33538">
    <property type="entry name" value="PROTEIN GAMETE EXPRESSED 1"/>
    <property type="match status" value="1"/>
</dbReference>
<dbReference type="PANTHER" id="PTHR33538:SF2">
    <property type="entry name" value="PROTEIN GAMETE EXPRESSED 1"/>
    <property type="match status" value="1"/>
</dbReference>
<organism>
    <name type="scientific">Arabidopsis thaliana</name>
    <name type="common">Mouse-ear cress</name>
    <dbReference type="NCBI Taxonomy" id="3702"/>
    <lineage>
        <taxon>Eukaryota</taxon>
        <taxon>Viridiplantae</taxon>
        <taxon>Streptophyta</taxon>
        <taxon>Embryophyta</taxon>
        <taxon>Tracheophyta</taxon>
        <taxon>Spermatophyta</taxon>
        <taxon>Magnoliopsida</taxon>
        <taxon>eudicotyledons</taxon>
        <taxon>Gunneridae</taxon>
        <taxon>Pentapetalae</taxon>
        <taxon>rosids</taxon>
        <taxon>malvids</taxon>
        <taxon>Brassicales</taxon>
        <taxon>Brassicaceae</taxon>
        <taxon>Camelineae</taxon>
        <taxon>Arabidopsis</taxon>
    </lineage>
</organism>
<accession>Q681K7</accession>
<accession>Q49L63</accession>
<accession>Q9FJ61</accession>
<evidence type="ECO:0000255" key="1"/>
<evidence type="ECO:0000269" key="2">
    <source>
    </source>
</evidence>
<evidence type="ECO:0000269" key="3">
    <source>
    </source>
</evidence>
<evidence type="ECO:0000305" key="4"/>
<name>GEX1_ARATH</name>